<protein>
    <recommendedName>
        <fullName evidence="1">tRNA-specific 2-thiouridylase MnmA</fullName>
        <ecNumber evidence="1">2.8.1.13</ecNumber>
    </recommendedName>
</protein>
<proteinExistence type="inferred from homology"/>
<name>MNMA_MYCCT</name>
<reference key="1">
    <citation type="submission" date="2005-09" db="EMBL/GenBank/DDBJ databases">
        <authorList>
            <person name="Glass J.I."/>
            <person name="Lartigue C."/>
            <person name="Pfannkoch C."/>
            <person name="Baden-Tillson H."/>
            <person name="Smith H.O."/>
            <person name="Venter J.C."/>
            <person name="Roske K."/>
            <person name="Wise K.S."/>
            <person name="Calcutt M.J."/>
            <person name="Nelson W.C."/>
            <person name="Nierman W.C."/>
        </authorList>
    </citation>
    <scope>NUCLEOTIDE SEQUENCE [LARGE SCALE GENOMIC DNA]</scope>
    <source>
        <strain>California kid / ATCC 27343 / NCTC 10154</strain>
    </source>
</reference>
<gene>
    <name evidence="1" type="primary">mnmA</name>
    <name type="ordered locus">MCAP_0523</name>
</gene>
<organism>
    <name type="scientific">Mycoplasma capricolum subsp. capricolum (strain California kid / ATCC 27343 / NCTC 10154)</name>
    <dbReference type="NCBI Taxonomy" id="340047"/>
    <lineage>
        <taxon>Bacteria</taxon>
        <taxon>Bacillati</taxon>
        <taxon>Mycoplasmatota</taxon>
        <taxon>Mollicutes</taxon>
        <taxon>Mycoplasmataceae</taxon>
        <taxon>Mycoplasma</taxon>
    </lineage>
</organism>
<evidence type="ECO:0000255" key="1">
    <source>
        <dbReference type="HAMAP-Rule" id="MF_00144"/>
    </source>
</evidence>
<comment type="function">
    <text evidence="1">Catalyzes the 2-thiolation of uridine at the wobble position (U34) of tRNA, leading to the formation of s(2)U34.</text>
</comment>
<comment type="catalytic activity">
    <reaction evidence="1">
        <text>S-sulfanyl-L-cysteinyl-[protein] + uridine(34) in tRNA + AH2 + ATP = 2-thiouridine(34) in tRNA + L-cysteinyl-[protein] + A + AMP + diphosphate + H(+)</text>
        <dbReference type="Rhea" id="RHEA:47032"/>
        <dbReference type="Rhea" id="RHEA-COMP:10131"/>
        <dbReference type="Rhea" id="RHEA-COMP:11726"/>
        <dbReference type="Rhea" id="RHEA-COMP:11727"/>
        <dbReference type="Rhea" id="RHEA-COMP:11728"/>
        <dbReference type="ChEBI" id="CHEBI:13193"/>
        <dbReference type="ChEBI" id="CHEBI:15378"/>
        <dbReference type="ChEBI" id="CHEBI:17499"/>
        <dbReference type="ChEBI" id="CHEBI:29950"/>
        <dbReference type="ChEBI" id="CHEBI:30616"/>
        <dbReference type="ChEBI" id="CHEBI:33019"/>
        <dbReference type="ChEBI" id="CHEBI:61963"/>
        <dbReference type="ChEBI" id="CHEBI:65315"/>
        <dbReference type="ChEBI" id="CHEBI:87170"/>
        <dbReference type="ChEBI" id="CHEBI:456215"/>
        <dbReference type="EC" id="2.8.1.13"/>
    </reaction>
</comment>
<comment type="subcellular location">
    <subcellularLocation>
        <location evidence="1">Cytoplasm</location>
    </subcellularLocation>
</comment>
<comment type="similarity">
    <text evidence="1">Belongs to the MnmA/TRMU family.</text>
</comment>
<keyword id="KW-0067">ATP-binding</keyword>
<keyword id="KW-0963">Cytoplasm</keyword>
<keyword id="KW-1015">Disulfide bond</keyword>
<keyword id="KW-0547">Nucleotide-binding</keyword>
<keyword id="KW-0694">RNA-binding</keyword>
<keyword id="KW-0808">Transferase</keyword>
<keyword id="KW-0819">tRNA processing</keyword>
<keyword id="KW-0820">tRNA-binding</keyword>
<accession>Q2SRW8</accession>
<dbReference type="EC" id="2.8.1.13" evidence="1"/>
<dbReference type="EMBL" id="CP000123">
    <property type="protein sequence ID" value="ABC01435.1"/>
    <property type="molecule type" value="Genomic_DNA"/>
</dbReference>
<dbReference type="RefSeq" id="WP_011387393.1">
    <property type="nucleotide sequence ID" value="NC_007633.1"/>
</dbReference>
<dbReference type="SMR" id="Q2SRW8"/>
<dbReference type="GeneID" id="23778521"/>
<dbReference type="KEGG" id="mcp:MCAP_0523"/>
<dbReference type="HOGENOM" id="CLU_035188_1_0_14"/>
<dbReference type="PhylomeDB" id="Q2SRW8"/>
<dbReference type="Proteomes" id="UP000001928">
    <property type="component" value="Chromosome"/>
</dbReference>
<dbReference type="GO" id="GO:0005737">
    <property type="term" value="C:cytoplasm"/>
    <property type="evidence" value="ECO:0007669"/>
    <property type="project" value="UniProtKB-SubCell"/>
</dbReference>
<dbReference type="GO" id="GO:0005524">
    <property type="term" value="F:ATP binding"/>
    <property type="evidence" value="ECO:0007669"/>
    <property type="project" value="UniProtKB-KW"/>
</dbReference>
<dbReference type="GO" id="GO:0000049">
    <property type="term" value="F:tRNA binding"/>
    <property type="evidence" value="ECO:0007669"/>
    <property type="project" value="UniProtKB-KW"/>
</dbReference>
<dbReference type="GO" id="GO:0103016">
    <property type="term" value="F:tRNA-uridine 2-sulfurtransferase activity"/>
    <property type="evidence" value="ECO:0007669"/>
    <property type="project" value="UniProtKB-EC"/>
</dbReference>
<dbReference type="GO" id="GO:0002143">
    <property type="term" value="P:tRNA wobble position uridine thiolation"/>
    <property type="evidence" value="ECO:0007669"/>
    <property type="project" value="TreeGrafter"/>
</dbReference>
<dbReference type="CDD" id="cd01998">
    <property type="entry name" value="MnmA_TRMU-like"/>
    <property type="match status" value="1"/>
</dbReference>
<dbReference type="FunFam" id="2.30.30.280:FF:000001">
    <property type="entry name" value="tRNA-specific 2-thiouridylase MnmA"/>
    <property type="match status" value="1"/>
</dbReference>
<dbReference type="FunFam" id="2.40.30.10:FF:000023">
    <property type="entry name" value="tRNA-specific 2-thiouridylase MnmA"/>
    <property type="match status" value="1"/>
</dbReference>
<dbReference type="FunFam" id="3.40.50.620:FF:000004">
    <property type="entry name" value="tRNA-specific 2-thiouridylase MnmA"/>
    <property type="match status" value="1"/>
</dbReference>
<dbReference type="Gene3D" id="2.30.30.280">
    <property type="entry name" value="Adenine nucleotide alpha hydrolases-like domains"/>
    <property type="match status" value="1"/>
</dbReference>
<dbReference type="Gene3D" id="3.40.50.620">
    <property type="entry name" value="HUPs"/>
    <property type="match status" value="1"/>
</dbReference>
<dbReference type="Gene3D" id="2.40.30.10">
    <property type="entry name" value="Translation factors"/>
    <property type="match status" value="1"/>
</dbReference>
<dbReference type="HAMAP" id="MF_00144">
    <property type="entry name" value="tRNA_thiouridyl_MnmA"/>
    <property type="match status" value="1"/>
</dbReference>
<dbReference type="InterPro" id="IPR004506">
    <property type="entry name" value="MnmA-like"/>
</dbReference>
<dbReference type="InterPro" id="IPR046885">
    <property type="entry name" value="MnmA-like_C"/>
</dbReference>
<dbReference type="InterPro" id="IPR046884">
    <property type="entry name" value="MnmA-like_central"/>
</dbReference>
<dbReference type="InterPro" id="IPR023382">
    <property type="entry name" value="MnmA-like_central_sf"/>
</dbReference>
<dbReference type="InterPro" id="IPR014729">
    <property type="entry name" value="Rossmann-like_a/b/a_fold"/>
</dbReference>
<dbReference type="NCBIfam" id="NF001138">
    <property type="entry name" value="PRK00143.1"/>
    <property type="match status" value="1"/>
</dbReference>
<dbReference type="NCBIfam" id="TIGR00420">
    <property type="entry name" value="trmU"/>
    <property type="match status" value="1"/>
</dbReference>
<dbReference type="PANTHER" id="PTHR11933:SF5">
    <property type="entry name" value="MITOCHONDRIAL TRNA-SPECIFIC 2-THIOURIDYLASE 1"/>
    <property type="match status" value="1"/>
</dbReference>
<dbReference type="PANTHER" id="PTHR11933">
    <property type="entry name" value="TRNA 5-METHYLAMINOMETHYL-2-THIOURIDYLATE -METHYLTRANSFERASE"/>
    <property type="match status" value="1"/>
</dbReference>
<dbReference type="Pfam" id="PF03054">
    <property type="entry name" value="tRNA_Me_trans"/>
    <property type="match status" value="1"/>
</dbReference>
<dbReference type="Pfam" id="PF20258">
    <property type="entry name" value="tRNA_Me_trans_C"/>
    <property type="match status" value="1"/>
</dbReference>
<dbReference type="Pfam" id="PF20259">
    <property type="entry name" value="tRNA_Me_trans_M"/>
    <property type="match status" value="1"/>
</dbReference>
<dbReference type="SUPFAM" id="SSF52402">
    <property type="entry name" value="Adenine nucleotide alpha hydrolases-like"/>
    <property type="match status" value="1"/>
</dbReference>
<sequence>MKQKVVVGLSGGVDSSVACYLLLQQGYEVEGLFMRNWDSATNNDILGNTNINDDICPQEQDYLDAKAVADKLNIKLHRVDFIKEYWDYVFSYFIEEYKKARTPNPDILCNKYIKFDKFLNYAINQLNADYIAMGHYAKVEFNKTTKQYELIKASDINKDQTYFLSQLNQNQLSKTLFPLANLTKEQVRKIALEQNLITANKKDSTGICFIGERNFTSFLQNYIPSQTGDIVDIKTNKVLGKHIGIMYYTIGQRKGINLSGMSEPYYVADKDVKKNILYVCSTSDQSYLYSTSCLVNDINWILDISKYVDDVNQFECQAKFRYRQLDNKVVVKKIDDNNYKVMFKKPLKAITIGQQAVFYLDDICLGGAVIDKVIK</sequence>
<feature type="chain" id="PRO_0000349706" description="tRNA-specific 2-thiouridylase MnmA">
    <location>
        <begin position="1"/>
        <end position="375"/>
    </location>
</feature>
<feature type="region of interest" description="Interaction with target base in tRNA" evidence="1">
    <location>
        <begin position="104"/>
        <end position="106"/>
    </location>
</feature>
<feature type="region of interest" description="Interaction with tRNA" evidence="1">
    <location>
        <begin position="158"/>
        <end position="160"/>
    </location>
</feature>
<feature type="region of interest" description="Interaction with tRNA" evidence="1">
    <location>
        <begin position="321"/>
        <end position="322"/>
    </location>
</feature>
<feature type="active site" description="Nucleophile" evidence="1">
    <location>
        <position position="109"/>
    </location>
</feature>
<feature type="active site" description="Cysteine persulfide intermediate" evidence="1">
    <location>
        <position position="208"/>
    </location>
</feature>
<feature type="binding site" evidence="1">
    <location>
        <begin position="8"/>
        <end position="15"/>
    </location>
    <ligand>
        <name>ATP</name>
        <dbReference type="ChEBI" id="CHEBI:30616"/>
    </ligand>
</feature>
<feature type="binding site" evidence="1">
    <location>
        <position position="34"/>
    </location>
    <ligand>
        <name>ATP</name>
        <dbReference type="ChEBI" id="CHEBI:30616"/>
    </ligand>
</feature>
<feature type="binding site" evidence="1">
    <location>
        <position position="134"/>
    </location>
    <ligand>
        <name>ATP</name>
        <dbReference type="ChEBI" id="CHEBI:30616"/>
    </ligand>
</feature>
<feature type="site" description="Interaction with tRNA" evidence="1">
    <location>
        <position position="135"/>
    </location>
</feature>
<feature type="site" description="Interaction with tRNA" evidence="1">
    <location>
        <position position="354"/>
    </location>
</feature>
<feature type="disulfide bond" description="Alternate" evidence="1">
    <location>
        <begin position="109"/>
        <end position="208"/>
    </location>
</feature>